<reference key="1">
    <citation type="submission" date="2006-02" db="EMBL/GenBank/DDBJ databases">
        <title>Complete sequence of chromosome of Jannaschia sp. CCS1.</title>
        <authorList>
            <consortium name="US DOE Joint Genome Institute"/>
            <person name="Copeland A."/>
            <person name="Lucas S."/>
            <person name="Lapidus A."/>
            <person name="Barry K."/>
            <person name="Detter J.C."/>
            <person name="Glavina del Rio T."/>
            <person name="Hammon N."/>
            <person name="Israni S."/>
            <person name="Pitluck S."/>
            <person name="Brettin T."/>
            <person name="Bruce D."/>
            <person name="Han C."/>
            <person name="Tapia R."/>
            <person name="Gilna P."/>
            <person name="Chertkov O."/>
            <person name="Saunders E."/>
            <person name="Schmutz J."/>
            <person name="Larimer F."/>
            <person name="Land M."/>
            <person name="Kyrpides N."/>
            <person name="Lykidis A."/>
            <person name="Moran M.A."/>
            <person name="Belas R."/>
            <person name="Ye W."/>
            <person name="Buchan A."/>
            <person name="Gonzalez J.M."/>
            <person name="Schell M.A."/>
            <person name="Richardson P."/>
        </authorList>
    </citation>
    <scope>NUCLEOTIDE SEQUENCE [LARGE SCALE GENOMIC DNA]</scope>
    <source>
        <strain>CCS1</strain>
    </source>
</reference>
<comment type="function">
    <text evidence="1">Catalyzes the attachment of proline to tRNA(Pro) in a two-step reaction: proline is first activated by ATP to form Pro-AMP and then transferred to the acceptor end of tRNA(Pro).</text>
</comment>
<comment type="catalytic activity">
    <reaction evidence="1">
        <text>tRNA(Pro) + L-proline + ATP = L-prolyl-tRNA(Pro) + AMP + diphosphate</text>
        <dbReference type="Rhea" id="RHEA:14305"/>
        <dbReference type="Rhea" id="RHEA-COMP:9700"/>
        <dbReference type="Rhea" id="RHEA-COMP:9702"/>
        <dbReference type="ChEBI" id="CHEBI:30616"/>
        <dbReference type="ChEBI" id="CHEBI:33019"/>
        <dbReference type="ChEBI" id="CHEBI:60039"/>
        <dbReference type="ChEBI" id="CHEBI:78442"/>
        <dbReference type="ChEBI" id="CHEBI:78532"/>
        <dbReference type="ChEBI" id="CHEBI:456215"/>
        <dbReference type="EC" id="6.1.1.15"/>
    </reaction>
</comment>
<comment type="subunit">
    <text evidence="1">Homodimer.</text>
</comment>
<comment type="subcellular location">
    <subcellularLocation>
        <location evidence="1">Cytoplasm</location>
    </subcellularLocation>
</comment>
<comment type="similarity">
    <text evidence="1">Belongs to the class-II aminoacyl-tRNA synthetase family. ProS type 2 subfamily.</text>
</comment>
<accession>Q28TI5</accession>
<keyword id="KW-0030">Aminoacyl-tRNA synthetase</keyword>
<keyword id="KW-0067">ATP-binding</keyword>
<keyword id="KW-0963">Cytoplasm</keyword>
<keyword id="KW-0436">Ligase</keyword>
<keyword id="KW-0547">Nucleotide-binding</keyword>
<keyword id="KW-0648">Protein biosynthesis</keyword>
<keyword id="KW-1185">Reference proteome</keyword>
<sequence>MRLSRYFLPVLKETPAEAQIVSHRLMLRAGMIKQASAGIYSWLPLGYKVLKRIERIVHEEQIRAGHIPMLMPTLQSADLWQKSGRFDAYGPEMLRLKDRHDRDMLYGPTNEEMITDMVGTFVTSYKSLPLTLYHIQWKFRDEVRPRFGVMRGREFLMKDGYNFDLTKEAALHAYNRHLVSYLRTYERMGLQAIPMRADSGPIGGDYTHEFLVLADTGESEVFYDAEITDLKFGDREIDYDDVAQCDAVLQEFTSRYARTDETHDEAEFAAIPGDRQRSARGIEVGQIFYFGTEYSEKLGAHVQNDEGERVPLHMGSHGIGVSRLLGAIIEASHDDKGIIWPEGVTPFHCGIVNLKQGDAEADAACEALETALENAGLEPLYDDRNERAGGKFATMDLIGLPWRITVGPRGLKNGVVELTSRRTGESEELTPDAAVARVAEVYAAHKPVNAAV</sequence>
<feature type="chain" id="PRO_0000248902" description="Proline--tRNA ligase">
    <location>
        <begin position="1"/>
        <end position="452"/>
    </location>
</feature>
<organism>
    <name type="scientific">Jannaschia sp. (strain CCS1)</name>
    <dbReference type="NCBI Taxonomy" id="290400"/>
    <lineage>
        <taxon>Bacteria</taxon>
        <taxon>Pseudomonadati</taxon>
        <taxon>Pseudomonadota</taxon>
        <taxon>Alphaproteobacteria</taxon>
        <taxon>Rhodobacterales</taxon>
        <taxon>Roseobacteraceae</taxon>
        <taxon>Jannaschia</taxon>
    </lineage>
</organism>
<dbReference type="EC" id="6.1.1.15" evidence="1"/>
<dbReference type="EMBL" id="CP000264">
    <property type="protein sequence ID" value="ABD53977.1"/>
    <property type="molecule type" value="Genomic_DNA"/>
</dbReference>
<dbReference type="RefSeq" id="WP_011454184.1">
    <property type="nucleotide sequence ID" value="NC_007802.1"/>
</dbReference>
<dbReference type="SMR" id="Q28TI5"/>
<dbReference type="STRING" id="290400.Jann_1060"/>
<dbReference type="KEGG" id="jan:Jann_1060"/>
<dbReference type="eggNOG" id="COG0442">
    <property type="taxonomic scope" value="Bacteria"/>
</dbReference>
<dbReference type="HOGENOM" id="CLU_016739_4_2_5"/>
<dbReference type="OrthoDB" id="9809052at2"/>
<dbReference type="Proteomes" id="UP000008326">
    <property type="component" value="Chromosome"/>
</dbReference>
<dbReference type="GO" id="GO:0005829">
    <property type="term" value="C:cytosol"/>
    <property type="evidence" value="ECO:0007669"/>
    <property type="project" value="TreeGrafter"/>
</dbReference>
<dbReference type="GO" id="GO:0005524">
    <property type="term" value="F:ATP binding"/>
    <property type="evidence" value="ECO:0007669"/>
    <property type="project" value="UniProtKB-UniRule"/>
</dbReference>
<dbReference type="GO" id="GO:0004827">
    <property type="term" value="F:proline-tRNA ligase activity"/>
    <property type="evidence" value="ECO:0007669"/>
    <property type="project" value="UniProtKB-UniRule"/>
</dbReference>
<dbReference type="GO" id="GO:0006433">
    <property type="term" value="P:prolyl-tRNA aminoacylation"/>
    <property type="evidence" value="ECO:0007669"/>
    <property type="project" value="UniProtKB-UniRule"/>
</dbReference>
<dbReference type="CDD" id="cd00861">
    <property type="entry name" value="ProRS_anticodon_short"/>
    <property type="match status" value="1"/>
</dbReference>
<dbReference type="CDD" id="cd00779">
    <property type="entry name" value="ProRS_core_prok"/>
    <property type="match status" value="1"/>
</dbReference>
<dbReference type="FunFam" id="3.30.930.10:FF:000042">
    <property type="entry name" value="probable proline--tRNA ligase, mitochondrial"/>
    <property type="match status" value="1"/>
</dbReference>
<dbReference type="Gene3D" id="3.40.50.800">
    <property type="entry name" value="Anticodon-binding domain"/>
    <property type="match status" value="1"/>
</dbReference>
<dbReference type="Gene3D" id="3.30.930.10">
    <property type="entry name" value="Bira Bifunctional Protein, Domain 2"/>
    <property type="match status" value="1"/>
</dbReference>
<dbReference type="HAMAP" id="MF_01570">
    <property type="entry name" value="Pro_tRNA_synth_type2"/>
    <property type="match status" value="1"/>
</dbReference>
<dbReference type="InterPro" id="IPR002314">
    <property type="entry name" value="aa-tRNA-synt_IIb"/>
</dbReference>
<dbReference type="InterPro" id="IPR006195">
    <property type="entry name" value="aa-tRNA-synth_II"/>
</dbReference>
<dbReference type="InterPro" id="IPR045864">
    <property type="entry name" value="aa-tRNA-synth_II/BPL/LPL"/>
</dbReference>
<dbReference type="InterPro" id="IPR004154">
    <property type="entry name" value="Anticodon-bd"/>
</dbReference>
<dbReference type="InterPro" id="IPR036621">
    <property type="entry name" value="Anticodon-bd_dom_sf"/>
</dbReference>
<dbReference type="InterPro" id="IPR002316">
    <property type="entry name" value="Pro-tRNA-ligase_IIa"/>
</dbReference>
<dbReference type="InterPro" id="IPR004500">
    <property type="entry name" value="Pro-tRNA-synth_IIa_bac-type"/>
</dbReference>
<dbReference type="InterPro" id="IPR050062">
    <property type="entry name" value="Pro-tRNA_synthetase"/>
</dbReference>
<dbReference type="InterPro" id="IPR023716">
    <property type="entry name" value="Prolyl-tRNA_ligase_IIa_type2"/>
</dbReference>
<dbReference type="InterPro" id="IPR044140">
    <property type="entry name" value="ProRS_anticodon_short"/>
</dbReference>
<dbReference type="InterPro" id="IPR033730">
    <property type="entry name" value="ProRS_core_prok"/>
</dbReference>
<dbReference type="NCBIfam" id="NF008979">
    <property type="entry name" value="PRK12325.1"/>
    <property type="match status" value="1"/>
</dbReference>
<dbReference type="NCBIfam" id="TIGR00409">
    <property type="entry name" value="proS_fam_II"/>
    <property type="match status" value="1"/>
</dbReference>
<dbReference type="PANTHER" id="PTHR42753">
    <property type="entry name" value="MITOCHONDRIAL RIBOSOME PROTEIN L39/PROLYL-TRNA LIGASE FAMILY MEMBER"/>
    <property type="match status" value="1"/>
</dbReference>
<dbReference type="PANTHER" id="PTHR42753:SF2">
    <property type="entry name" value="PROLINE--TRNA LIGASE"/>
    <property type="match status" value="1"/>
</dbReference>
<dbReference type="Pfam" id="PF03129">
    <property type="entry name" value="HGTP_anticodon"/>
    <property type="match status" value="1"/>
</dbReference>
<dbReference type="Pfam" id="PF00587">
    <property type="entry name" value="tRNA-synt_2b"/>
    <property type="match status" value="1"/>
</dbReference>
<dbReference type="PRINTS" id="PR01046">
    <property type="entry name" value="TRNASYNTHPRO"/>
</dbReference>
<dbReference type="SUPFAM" id="SSF52954">
    <property type="entry name" value="Class II aaRS ABD-related"/>
    <property type="match status" value="1"/>
</dbReference>
<dbReference type="SUPFAM" id="SSF55681">
    <property type="entry name" value="Class II aaRS and biotin synthetases"/>
    <property type="match status" value="1"/>
</dbReference>
<dbReference type="PROSITE" id="PS50862">
    <property type="entry name" value="AA_TRNA_LIGASE_II"/>
    <property type="match status" value="1"/>
</dbReference>
<protein>
    <recommendedName>
        <fullName evidence="1">Proline--tRNA ligase</fullName>
        <ecNumber evidence="1">6.1.1.15</ecNumber>
    </recommendedName>
    <alternativeName>
        <fullName evidence="1">Prolyl-tRNA synthetase</fullName>
        <shortName evidence="1">ProRS</shortName>
    </alternativeName>
</protein>
<name>SYP_JANSC</name>
<proteinExistence type="inferred from homology"/>
<gene>
    <name evidence="1" type="primary">proS</name>
    <name type="ordered locus">Jann_1060</name>
</gene>
<evidence type="ECO:0000255" key="1">
    <source>
        <dbReference type="HAMAP-Rule" id="MF_01570"/>
    </source>
</evidence>